<gene>
    <name evidence="1" type="primary">aspS</name>
    <name type="ordered locus">Chy400_2500</name>
</gene>
<feature type="chain" id="PRO_1000198970" description="Aspartate--tRNA(Asp/Asn) ligase">
    <location>
        <begin position="1"/>
        <end position="589"/>
    </location>
</feature>
<feature type="region of interest" description="Aspartate" evidence="1">
    <location>
        <begin position="198"/>
        <end position="201"/>
    </location>
</feature>
<feature type="binding site" evidence="1">
    <location>
        <position position="174"/>
    </location>
    <ligand>
        <name>L-aspartate</name>
        <dbReference type="ChEBI" id="CHEBI:29991"/>
    </ligand>
</feature>
<feature type="binding site" evidence="1">
    <location>
        <begin position="220"/>
        <end position="222"/>
    </location>
    <ligand>
        <name>ATP</name>
        <dbReference type="ChEBI" id="CHEBI:30616"/>
    </ligand>
</feature>
<feature type="binding site" evidence="1">
    <location>
        <position position="220"/>
    </location>
    <ligand>
        <name>L-aspartate</name>
        <dbReference type="ChEBI" id="CHEBI:29991"/>
    </ligand>
</feature>
<feature type="binding site" evidence="1">
    <location>
        <position position="229"/>
    </location>
    <ligand>
        <name>ATP</name>
        <dbReference type="ChEBI" id="CHEBI:30616"/>
    </ligand>
</feature>
<feature type="binding site" evidence="1">
    <location>
        <position position="450"/>
    </location>
    <ligand>
        <name>L-aspartate</name>
        <dbReference type="ChEBI" id="CHEBI:29991"/>
    </ligand>
</feature>
<feature type="binding site" evidence="1">
    <location>
        <position position="484"/>
    </location>
    <ligand>
        <name>ATP</name>
        <dbReference type="ChEBI" id="CHEBI:30616"/>
    </ligand>
</feature>
<feature type="binding site" evidence="1">
    <location>
        <position position="491"/>
    </location>
    <ligand>
        <name>L-aspartate</name>
        <dbReference type="ChEBI" id="CHEBI:29991"/>
    </ligand>
</feature>
<feature type="binding site" evidence="1">
    <location>
        <begin position="536"/>
        <end position="539"/>
    </location>
    <ligand>
        <name>ATP</name>
        <dbReference type="ChEBI" id="CHEBI:30616"/>
    </ligand>
</feature>
<feature type="site" description="Important for tRNA non-discrimination" evidence="1">
    <location>
        <position position="31"/>
    </location>
</feature>
<keyword id="KW-0030">Aminoacyl-tRNA synthetase</keyword>
<keyword id="KW-0067">ATP-binding</keyword>
<keyword id="KW-0963">Cytoplasm</keyword>
<keyword id="KW-0436">Ligase</keyword>
<keyword id="KW-0547">Nucleotide-binding</keyword>
<keyword id="KW-0648">Protein biosynthesis</keyword>
<proteinExistence type="inferred from homology"/>
<sequence length="589" mass="66668">MYRSHTCGELRPAHAGQEVTLAGWVHRRRDHGDLIFIDLRDRYGITQVVFNSAHPTAHEVAETVRSEYVLQVRGKVRIRPPEAVNPDLATGEIELEASEAQVLNPARTPPIYIAKEGGEDESVRLKYRYLDLRRERMQRNLILRHRVVKFIRDFLDAEGFLEIETPILIKSTPEGARDYLVPSRLHPGKFYALPQSPQQLKQLLMVAGYDKYFQIARCFRDEDQRADRQPEFTQLDMEMSFVDQDDVLDLIERMFTALCRTVVPHKHLPTPFRRLSYAEAMERYGSDKPDLRYGLELVNLSDLLIETPFQVFRNVLNSGGQVKGIRAPGCAHFSRKQIDELTDVVRAGGAKGLAWAVLPTDGGEVRSSFAKNLAPGEFAAIVERMQAEAGDLLLIVADQPAVVAASLDKLRRNLAERLQLADPNTLCFAWIVDFPLVEWNEDEQRWDAVHHPFTAPKDEDMHLLATDPGKVRAKAYDLILNGYEAGGGSIRIHRRDVQQQIFSLLGISEEQAQAQFGHMLEAFEYGAPPHGGIAPGIDRLVMILADEPTIREVMAFPKTQQAVDLMTNAPSPVDERQLKELHIRIVMPE</sequence>
<comment type="function">
    <text evidence="1">Aspartyl-tRNA synthetase with relaxed tRNA specificity since it is able to aspartylate not only its cognate tRNA(Asp) but also tRNA(Asn). Reaction proceeds in two steps: L-aspartate is first activated by ATP to form Asp-AMP and then transferred to the acceptor end of tRNA(Asp/Asn).</text>
</comment>
<comment type="catalytic activity">
    <reaction evidence="1">
        <text>tRNA(Asx) + L-aspartate + ATP = L-aspartyl-tRNA(Asx) + AMP + diphosphate</text>
        <dbReference type="Rhea" id="RHEA:18349"/>
        <dbReference type="Rhea" id="RHEA-COMP:9710"/>
        <dbReference type="Rhea" id="RHEA-COMP:9711"/>
        <dbReference type="ChEBI" id="CHEBI:29991"/>
        <dbReference type="ChEBI" id="CHEBI:30616"/>
        <dbReference type="ChEBI" id="CHEBI:33019"/>
        <dbReference type="ChEBI" id="CHEBI:78442"/>
        <dbReference type="ChEBI" id="CHEBI:78516"/>
        <dbReference type="ChEBI" id="CHEBI:456215"/>
        <dbReference type="EC" id="6.1.1.23"/>
    </reaction>
</comment>
<comment type="subunit">
    <text evidence="1">Homodimer.</text>
</comment>
<comment type="subcellular location">
    <subcellularLocation>
        <location evidence="1">Cytoplasm</location>
    </subcellularLocation>
</comment>
<comment type="similarity">
    <text evidence="1">Belongs to the class-II aminoacyl-tRNA synthetase family. Type 1 subfamily.</text>
</comment>
<protein>
    <recommendedName>
        <fullName evidence="1">Aspartate--tRNA(Asp/Asn) ligase</fullName>
        <ecNumber evidence="1">6.1.1.23</ecNumber>
    </recommendedName>
    <alternativeName>
        <fullName evidence="1">Aspartyl-tRNA synthetase</fullName>
        <shortName evidence="1">AspRS</shortName>
    </alternativeName>
    <alternativeName>
        <fullName evidence="1">Non-discriminating aspartyl-tRNA synthetase</fullName>
        <shortName evidence="1">ND-AspRS</shortName>
    </alternativeName>
</protein>
<reference key="1">
    <citation type="submission" date="2009-01" db="EMBL/GenBank/DDBJ databases">
        <title>Complete sequence of Chloroflexus sp. Y-400-fl.</title>
        <authorList>
            <consortium name="US DOE Joint Genome Institute"/>
            <person name="Lucas S."/>
            <person name="Copeland A."/>
            <person name="Lapidus A."/>
            <person name="Glavina del Rio T."/>
            <person name="Dalin E."/>
            <person name="Tice H."/>
            <person name="Bruce D."/>
            <person name="Goodwin L."/>
            <person name="Pitluck S."/>
            <person name="Sims D."/>
            <person name="Kiss H."/>
            <person name="Brettin T."/>
            <person name="Detter J.C."/>
            <person name="Han C."/>
            <person name="Larimer F."/>
            <person name="Land M."/>
            <person name="Hauser L."/>
            <person name="Kyrpides N."/>
            <person name="Ovchinnikova G."/>
            <person name="Bryant D.A."/>
            <person name="Richardson P."/>
        </authorList>
    </citation>
    <scope>NUCLEOTIDE SEQUENCE [LARGE SCALE GENOMIC DNA]</scope>
    <source>
        <strain>ATCC 29364 / DSM 637 / Y-400-fl</strain>
    </source>
</reference>
<accession>B9LJ78</accession>
<evidence type="ECO:0000255" key="1">
    <source>
        <dbReference type="HAMAP-Rule" id="MF_00044"/>
    </source>
</evidence>
<name>SYDND_CHLSY</name>
<dbReference type="EC" id="6.1.1.23" evidence="1"/>
<dbReference type="EMBL" id="CP001364">
    <property type="protein sequence ID" value="ACM53894.1"/>
    <property type="molecule type" value="Genomic_DNA"/>
</dbReference>
<dbReference type="SMR" id="B9LJ78"/>
<dbReference type="KEGG" id="chl:Chy400_2500"/>
<dbReference type="HOGENOM" id="CLU_014330_3_2_0"/>
<dbReference type="OrthoDB" id="9802326at2"/>
<dbReference type="GO" id="GO:0005737">
    <property type="term" value="C:cytoplasm"/>
    <property type="evidence" value="ECO:0007669"/>
    <property type="project" value="UniProtKB-SubCell"/>
</dbReference>
<dbReference type="GO" id="GO:0004815">
    <property type="term" value="F:aspartate-tRNA ligase activity"/>
    <property type="evidence" value="ECO:0007669"/>
    <property type="project" value="UniProtKB-UniRule"/>
</dbReference>
<dbReference type="GO" id="GO:0050560">
    <property type="term" value="F:aspartate-tRNA(Asn) ligase activity"/>
    <property type="evidence" value="ECO:0007669"/>
    <property type="project" value="UniProtKB-EC"/>
</dbReference>
<dbReference type="GO" id="GO:0005524">
    <property type="term" value="F:ATP binding"/>
    <property type="evidence" value="ECO:0007669"/>
    <property type="project" value="UniProtKB-UniRule"/>
</dbReference>
<dbReference type="GO" id="GO:0003676">
    <property type="term" value="F:nucleic acid binding"/>
    <property type="evidence" value="ECO:0007669"/>
    <property type="project" value="InterPro"/>
</dbReference>
<dbReference type="GO" id="GO:0006422">
    <property type="term" value="P:aspartyl-tRNA aminoacylation"/>
    <property type="evidence" value="ECO:0007669"/>
    <property type="project" value="UniProtKB-UniRule"/>
</dbReference>
<dbReference type="CDD" id="cd00777">
    <property type="entry name" value="AspRS_core"/>
    <property type="match status" value="1"/>
</dbReference>
<dbReference type="CDD" id="cd04317">
    <property type="entry name" value="EcAspRS_like_N"/>
    <property type="match status" value="1"/>
</dbReference>
<dbReference type="Gene3D" id="3.30.930.10">
    <property type="entry name" value="Bira Bifunctional Protein, Domain 2"/>
    <property type="match status" value="1"/>
</dbReference>
<dbReference type="Gene3D" id="3.30.1360.30">
    <property type="entry name" value="GAD-like domain"/>
    <property type="match status" value="1"/>
</dbReference>
<dbReference type="Gene3D" id="2.40.50.140">
    <property type="entry name" value="Nucleic acid-binding proteins"/>
    <property type="match status" value="1"/>
</dbReference>
<dbReference type="HAMAP" id="MF_00044">
    <property type="entry name" value="Asp_tRNA_synth_type1"/>
    <property type="match status" value="1"/>
</dbReference>
<dbReference type="InterPro" id="IPR004364">
    <property type="entry name" value="Aa-tRNA-synt_II"/>
</dbReference>
<dbReference type="InterPro" id="IPR006195">
    <property type="entry name" value="aa-tRNA-synth_II"/>
</dbReference>
<dbReference type="InterPro" id="IPR045864">
    <property type="entry name" value="aa-tRNA-synth_II/BPL/LPL"/>
</dbReference>
<dbReference type="InterPro" id="IPR004524">
    <property type="entry name" value="Asp-tRNA-ligase_1"/>
</dbReference>
<dbReference type="InterPro" id="IPR047089">
    <property type="entry name" value="Asp-tRNA-ligase_1_N"/>
</dbReference>
<dbReference type="InterPro" id="IPR002312">
    <property type="entry name" value="Asp/Asn-tRNA-synth_IIb"/>
</dbReference>
<dbReference type="InterPro" id="IPR047090">
    <property type="entry name" value="AspRS_core"/>
</dbReference>
<dbReference type="InterPro" id="IPR004115">
    <property type="entry name" value="GAD-like_sf"/>
</dbReference>
<dbReference type="InterPro" id="IPR029351">
    <property type="entry name" value="GAD_dom"/>
</dbReference>
<dbReference type="InterPro" id="IPR012340">
    <property type="entry name" value="NA-bd_OB-fold"/>
</dbReference>
<dbReference type="InterPro" id="IPR004365">
    <property type="entry name" value="NA-bd_OB_tRNA"/>
</dbReference>
<dbReference type="NCBIfam" id="TIGR00459">
    <property type="entry name" value="aspS_bact"/>
    <property type="match status" value="1"/>
</dbReference>
<dbReference type="NCBIfam" id="NF001750">
    <property type="entry name" value="PRK00476.1"/>
    <property type="match status" value="1"/>
</dbReference>
<dbReference type="PANTHER" id="PTHR22594:SF5">
    <property type="entry name" value="ASPARTATE--TRNA LIGASE, MITOCHONDRIAL"/>
    <property type="match status" value="1"/>
</dbReference>
<dbReference type="PANTHER" id="PTHR22594">
    <property type="entry name" value="ASPARTYL/LYSYL-TRNA SYNTHETASE"/>
    <property type="match status" value="1"/>
</dbReference>
<dbReference type="Pfam" id="PF02938">
    <property type="entry name" value="GAD"/>
    <property type="match status" value="1"/>
</dbReference>
<dbReference type="Pfam" id="PF00152">
    <property type="entry name" value="tRNA-synt_2"/>
    <property type="match status" value="1"/>
</dbReference>
<dbReference type="Pfam" id="PF01336">
    <property type="entry name" value="tRNA_anti-codon"/>
    <property type="match status" value="1"/>
</dbReference>
<dbReference type="PRINTS" id="PR01042">
    <property type="entry name" value="TRNASYNTHASP"/>
</dbReference>
<dbReference type="SUPFAM" id="SSF55681">
    <property type="entry name" value="Class II aaRS and biotin synthetases"/>
    <property type="match status" value="1"/>
</dbReference>
<dbReference type="SUPFAM" id="SSF55261">
    <property type="entry name" value="GAD domain-like"/>
    <property type="match status" value="1"/>
</dbReference>
<dbReference type="SUPFAM" id="SSF50249">
    <property type="entry name" value="Nucleic acid-binding proteins"/>
    <property type="match status" value="1"/>
</dbReference>
<dbReference type="PROSITE" id="PS50862">
    <property type="entry name" value="AA_TRNA_LIGASE_II"/>
    <property type="match status" value="1"/>
</dbReference>
<organism>
    <name type="scientific">Chloroflexus aurantiacus (strain ATCC 29364 / DSM 637 / Y-400-fl)</name>
    <dbReference type="NCBI Taxonomy" id="480224"/>
    <lineage>
        <taxon>Bacteria</taxon>
        <taxon>Bacillati</taxon>
        <taxon>Chloroflexota</taxon>
        <taxon>Chloroflexia</taxon>
        <taxon>Chloroflexales</taxon>
        <taxon>Chloroflexineae</taxon>
        <taxon>Chloroflexaceae</taxon>
        <taxon>Chloroflexus</taxon>
    </lineage>
</organism>